<name>PSD_SHESR</name>
<reference key="1">
    <citation type="submission" date="2006-08" db="EMBL/GenBank/DDBJ databases">
        <title>Complete sequence of chromosome 1 of Shewanella sp. MR-7.</title>
        <authorList>
            <person name="Copeland A."/>
            <person name="Lucas S."/>
            <person name="Lapidus A."/>
            <person name="Barry K."/>
            <person name="Detter J.C."/>
            <person name="Glavina del Rio T."/>
            <person name="Hammon N."/>
            <person name="Israni S."/>
            <person name="Dalin E."/>
            <person name="Tice H."/>
            <person name="Pitluck S."/>
            <person name="Kiss H."/>
            <person name="Brettin T."/>
            <person name="Bruce D."/>
            <person name="Han C."/>
            <person name="Tapia R."/>
            <person name="Gilna P."/>
            <person name="Schmutz J."/>
            <person name="Larimer F."/>
            <person name="Land M."/>
            <person name="Hauser L."/>
            <person name="Kyrpides N."/>
            <person name="Mikhailova N."/>
            <person name="Nealson K."/>
            <person name="Konstantinidis K."/>
            <person name="Klappenbach J."/>
            <person name="Tiedje J."/>
            <person name="Richardson P."/>
        </authorList>
    </citation>
    <scope>NUCLEOTIDE SEQUENCE [LARGE SCALE GENOMIC DNA]</scope>
    <source>
        <strain>MR-7</strain>
    </source>
</reference>
<comment type="function">
    <text evidence="1">Catalyzes the formation of phosphatidylethanolamine (PtdEtn) from phosphatidylserine (PtdSer).</text>
</comment>
<comment type="catalytic activity">
    <reaction evidence="1">
        <text>a 1,2-diacyl-sn-glycero-3-phospho-L-serine + H(+) = a 1,2-diacyl-sn-glycero-3-phosphoethanolamine + CO2</text>
        <dbReference type="Rhea" id="RHEA:20828"/>
        <dbReference type="ChEBI" id="CHEBI:15378"/>
        <dbReference type="ChEBI" id="CHEBI:16526"/>
        <dbReference type="ChEBI" id="CHEBI:57262"/>
        <dbReference type="ChEBI" id="CHEBI:64612"/>
        <dbReference type="EC" id="4.1.1.65"/>
    </reaction>
</comment>
<comment type="cofactor">
    <cofactor evidence="1">
        <name>pyruvate</name>
        <dbReference type="ChEBI" id="CHEBI:15361"/>
    </cofactor>
    <text evidence="1">Binds 1 pyruvoyl group covalently per subunit.</text>
</comment>
<comment type="pathway">
    <text evidence="1">Phospholipid metabolism; phosphatidylethanolamine biosynthesis; phosphatidylethanolamine from CDP-diacylglycerol: step 2/2.</text>
</comment>
<comment type="subunit">
    <text evidence="1">Heterodimer of a large membrane-associated beta subunit and a small pyruvoyl-containing alpha subunit.</text>
</comment>
<comment type="subcellular location">
    <subcellularLocation>
        <location evidence="1">Cell membrane</location>
        <topology evidence="1">Peripheral membrane protein</topology>
    </subcellularLocation>
</comment>
<comment type="PTM">
    <text evidence="1">Is synthesized initially as an inactive proenzyme. Formation of the active enzyme involves a self-maturation process in which the active site pyruvoyl group is generated from an internal serine residue via an autocatalytic post-translational modification. Two non-identical subunits are generated from the proenzyme in this reaction, and the pyruvate is formed at the N-terminus of the alpha chain, which is derived from the carboxyl end of the proenzyme. The autoendoproteolytic cleavage occurs by a canonical serine protease mechanism, in which the side chain hydroxyl group of the serine supplies its oxygen atom to form the C-terminus of the beta chain, while the remainder of the serine residue undergoes an oxidative deamination to produce ammonia and the pyruvoyl prosthetic group on the alpha chain. During this reaction, the Ser that is part of the protease active site of the proenzyme becomes the pyruvoyl prosthetic group, which constitutes an essential element of the active site of the mature decarboxylase.</text>
</comment>
<comment type="similarity">
    <text evidence="1">Belongs to the phosphatidylserine decarboxylase family. PSD-B subfamily. Prokaryotic type I sub-subfamily.</text>
</comment>
<keyword id="KW-1003">Cell membrane</keyword>
<keyword id="KW-0210">Decarboxylase</keyword>
<keyword id="KW-0444">Lipid biosynthesis</keyword>
<keyword id="KW-0443">Lipid metabolism</keyword>
<keyword id="KW-0456">Lyase</keyword>
<keyword id="KW-0472">Membrane</keyword>
<keyword id="KW-0594">Phospholipid biosynthesis</keyword>
<keyword id="KW-1208">Phospholipid metabolism</keyword>
<keyword id="KW-0670">Pyruvate</keyword>
<keyword id="KW-0865">Zymogen</keyword>
<protein>
    <recommendedName>
        <fullName evidence="1">Phosphatidylserine decarboxylase proenzyme</fullName>
        <ecNumber evidence="1">4.1.1.65</ecNumber>
    </recommendedName>
    <component>
        <recommendedName>
            <fullName evidence="1">Phosphatidylserine decarboxylase alpha chain</fullName>
        </recommendedName>
    </component>
    <component>
        <recommendedName>
            <fullName evidence="1">Phosphatidylserine decarboxylase beta chain</fullName>
        </recommendedName>
    </component>
</protein>
<sequence length="292" mass="31843">MDKVKIALQYMLPKHLLSRLVGKLAASEAGALTTAAIKWFIKQYKIDMSEAAQSEPEAYKSFNDFFTRALKPGIRPINTAANIMVHPVDGAVSQLGPIKDGRIFQAKGHHYSSLTLLGDQAEDAKRFEGGDFATIYLAPKDYHRIHMPIKGTLSKMTYVPGELFSVNPLTARHVPGLFARNERVVAIFETELGPLAMVLVGATIVASIETVWAGTITPPTGKQVFTWEYPTVGPDAITLDKGEEMGRFKLGSTVVMLFAKDAIDTFAEGVEPEAVTRMGQAFANLKNQASAD</sequence>
<gene>
    <name evidence="1" type="primary">psd</name>
    <name type="ordered locus">Shewmr7_3441</name>
</gene>
<evidence type="ECO:0000255" key="1">
    <source>
        <dbReference type="HAMAP-Rule" id="MF_00662"/>
    </source>
</evidence>
<dbReference type="EC" id="4.1.1.65" evidence="1"/>
<dbReference type="EMBL" id="CP000444">
    <property type="protein sequence ID" value="ABI44422.1"/>
    <property type="molecule type" value="Genomic_DNA"/>
</dbReference>
<dbReference type="SMR" id="Q0HR33"/>
<dbReference type="KEGG" id="shm:Shewmr7_3441"/>
<dbReference type="HOGENOM" id="CLU_029061_4_1_6"/>
<dbReference type="UniPathway" id="UPA00558">
    <property type="reaction ID" value="UER00616"/>
</dbReference>
<dbReference type="GO" id="GO:0005886">
    <property type="term" value="C:plasma membrane"/>
    <property type="evidence" value="ECO:0007669"/>
    <property type="project" value="UniProtKB-SubCell"/>
</dbReference>
<dbReference type="GO" id="GO:0004609">
    <property type="term" value="F:phosphatidylserine decarboxylase activity"/>
    <property type="evidence" value="ECO:0007669"/>
    <property type="project" value="UniProtKB-UniRule"/>
</dbReference>
<dbReference type="GO" id="GO:0006646">
    <property type="term" value="P:phosphatidylethanolamine biosynthetic process"/>
    <property type="evidence" value="ECO:0007669"/>
    <property type="project" value="UniProtKB-UniRule"/>
</dbReference>
<dbReference type="HAMAP" id="MF_00662">
    <property type="entry name" value="PS_decarb_PSD_B_type1"/>
    <property type="match status" value="1"/>
</dbReference>
<dbReference type="InterPro" id="IPR003817">
    <property type="entry name" value="PS_Dcarbxylase"/>
</dbReference>
<dbReference type="InterPro" id="IPR033177">
    <property type="entry name" value="PSD-B"/>
</dbReference>
<dbReference type="InterPro" id="IPR033178">
    <property type="entry name" value="PSD_type1_pro"/>
</dbReference>
<dbReference type="NCBIfam" id="TIGR00163">
    <property type="entry name" value="PS_decarb"/>
    <property type="match status" value="1"/>
</dbReference>
<dbReference type="PANTHER" id="PTHR10067">
    <property type="entry name" value="PHOSPHATIDYLSERINE DECARBOXYLASE"/>
    <property type="match status" value="1"/>
</dbReference>
<dbReference type="PANTHER" id="PTHR10067:SF6">
    <property type="entry name" value="PHOSPHATIDYLSERINE DECARBOXYLASE PROENZYME, MITOCHONDRIAL"/>
    <property type="match status" value="1"/>
</dbReference>
<dbReference type="Pfam" id="PF02666">
    <property type="entry name" value="PS_Dcarbxylase"/>
    <property type="match status" value="1"/>
</dbReference>
<organism>
    <name type="scientific">Shewanella sp. (strain MR-7)</name>
    <dbReference type="NCBI Taxonomy" id="60481"/>
    <lineage>
        <taxon>Bacteria</taxon>
        <taxon>Pseudomonadati</taxon>
        <taxon>Pseudomonadota</taxon>
        <taxon>Gammaproteobacteria</taxon>
        <taxon>Alteromonadales</taxon>
        <taxon>Shewanellaceae</taxon>
        <taxon>Shewanella</taxon>
    </lineage>
</organism>
<accession>Q0HR33</accession>
<proteinExistence type="inferred from homology"/>
<feature type="chain" id="PRO_0000262155" description="Phosphatidylserine decarboxylase beta chain" evidence="1">
    <location>
        <begin position="1"/>
        <end position="251"/>
    </location>
</feature>
<feature type="chain" id="PRO_0000262156" description="Phosphatidylserine decarboxylase alpha chain" evidence="1">
    <location>
        <begin position="252"/>
        <end position="292"/>
    </location>
</feature>
<feature type="active site" description="Charge relay system; for autoendoproteolytic cleavage activity" evidence="1">
    <location>
        <position position="89"/>
    </location>
</feature>
<feature type="active site" description="Charge relay system; for autoendoproteolytic cleavage activity" evidence="1">
    <location>
        <position position="146"/>
    </location>
</feature>
<feature type="active site" description="Charge relay system; for autoendoproteolytic cleavage activity" evidence="1">
    <location>
        <position position="252"/>
    </location>
</feature>
<feature type="active site" description="Schiff-base intermediate with substrate; via pyruvic acid; for decarboxylase activity" evidence="1">
    <location>
        <position position="252"/>
    </location>
</feature>
<feature type="site" description="Cleavage (non-hydrolytic); by autocatalysis" evidence="1">
    <location>
        <begin position="251"/>
        <end position="252"/>
    </location>
</feature>
<feature type="modified residue" description="Pyruvic acid (Ser); by autocatalysis" evidence="1">
    <location>
        <position position="252"/>
    </location>
</feature>